<dbReference type="PIR" id="S10655">
    <property type="entry name" value="S10655"/>
</dbReference>
<dbReference type="SMR" id="P20298"/>
<dbReference type="GO" id="GO:0016020">
    <property type="term" value="C:membrane"/>
    <property type="evidence" value="ECO:0007669"/>
    <property type="project" value="InterPro"/>
</dbReference>
<dbReference type="Gene3D" id="1.10.1760.20">
    <property type="match status" value="1"/>
</dbReference>
<dbReference type="InterPro" id="IPR009825">
    <property type="entry name" value="ECF_substrate-spec-like"/>
</dbReference>
<dbReference type="PANTHER" id="PTHR37815">
    <property type="entry name" value="UPF0397 PROTEIN BC_2624-RELATED"/>
    <property type="match status" value="1"/>
</dbReference>
<dbReference type="PANTHER" id="PTHR37815:SF3">
    <property type="entry name" value="UPF0397 PROTEIN SPR0429"/>
    <property type="match status" value="1"/>
</dbReference>
<dbReference type="Pfam" id="PF07155">
    <property type="entry name" value="ECF-ribofla_trS"/>
    <property type="match status" value="1"/>
</dbReference>
<sequence>AVTVTTMLVRIPIPASQGYLNFGDIMIMLVAVLFGPLVGGFAGGVGSALADVIGYPSWALFTLVIKGTEGVIVGWFSKGTTNYGRILLGTVLGGIVMVLGYVSVAYVLYGPGGAVAEFYNDIVQAVSGIIIGGGLGYILKKRIGPILE</sequence>
<organism>
    <name type="scientific">Pyrococcus woesei</name>
    <dbReference type="NCBI Taxonomy" id="2262"/>
    <lineage>
        <taxon>Archaea</taxon>
        <taxon>Methanobacteriati</taxon>
        <taxon>Methanobacteriota</taxon>
        <taxon>Thermococci</taxon>
        <taxon>Thermococcales</taxon>
        <taxon>Thermococcaceae</taxon>
        <taxon>Pyrococcus</taxon>
    </lineage>
</organism>
<protein>
    <recommendedName>
        <fullName>Uncharacterized protein in gap 3'region</fullName>
    </recommendedName>
    <alternativeName>
        <fullName>ORF X</fullName>
    </alternativeName>
</protein>
<accession>P20298</accession>
<proteinExistence type="predicted"/>
<reference key="1">
    <citation type="journal article" date="1990" name="J. Bacteriol.">
        <title>Glyceraldehyde-3-phosphate dehydrogenase from the hyperthermophilic archaebacterium Pyrococcus woesei: characterization of the enzyme, cloning and sequencing of the gene, and expression in Escherichia coli.</title>
        <authorList>
            <person name="Zwickl P."/>
            <person name="Fabry S."/>
            <person name="Bogedain C."/>
            <person name="Haas A."/>
            <person name="Hensel R."/>
        </authorList>
    </citation>
    <scope>NUCLEOTIDE SEQUENCE [GENOMIC DNA]</scope>
    <source>
        <strain>ATCC 49860 / DSM 3773 / JCM 8421 / Vul4</strain>
    </source>
</reference>
<name>YORX_PYRWO</name>
<feature type="chain" id="PRO_0000066380" description="Uncharacterized protein in gap 3'region">
    <location>
        <begin position="1" status="less than"/>
        <end position="148"/>
    </location>
</feature>
<feature type="non-terminal residue">
    <location>
        <position position="1"/>
    </location>
</feature>